<sequence length="217" mass="24477">MTALSESALMVRAALEERGLETPMTSKVVSREEKKEKIEYHMREILELLSLDLTDDSLMETPHRIAKMYVDEVFSGLDYANFPKITVIENKMKCDEMVRVKGITLTSTCEHHLVTIDGKATVAYIPRGKIIGLSKINRIVRFFAQRPQVQERMTQQILVALQTLLESDDVAVTIDATHYCVKARGVMDATSETTTTALGGIFKRIPATRAEFFHGIR</sequence>
<organism>
    <name type="scientific">Photobacterium profundum (strain SS9)</name>
    <dbReference type="NCBI Taxonomy" id="298386"/>
    <lineage>
        <taxon>Bacteria</taxon>
        <taxon>Pseudomonadati</taxon>
        <taxon>Pseudomonadota</taxon>
        <taxon>Gammaproteobacteria</taxon>
        <taxon>Vibrionales</taxon>
        <taxon>Vibrionaceae</taxon>
        <taxon>Photobacterium</taxon>
    </lineage>
</organism>
<name>GCH1_PHOPR</name>
<protein>
    <recommendedName>
        <fullName evidence="2">GTP cyclohydrolase 1</fullName>
        <ecNumber evidence="2">3.5.4.16</ecNumber>
    </recommendedName>
    <alternativeName>
        <fullName evidence="2">GTP cyclohydrolase I</fullName>
        <shortName evidence="2">GTP-CH-I</shortName>
    </alternativeName>
</protein>
<keyword id="KW-0342">GTP-binding</keyword>
<keyword id="KW-0378">Hydrolase</keyword>
<keyword id="KW-0479">Metal-binding</keyword>
<keyword id="KW-0547">Nucleotide-binding</keyword>
<keyword id="KW-0554">One-carbon metabolism</keyword>
<keyword id="KW-1185">Reference proteome</keyword>
<keyword id="KW-0862">Zinc</keyword>
<evidence type="ECO:0000250" key="1"/>
<evidence type="ECO:0000255" key="2">
    <source>
        <dbReference type="HAMAP-Rule" id="MF_00223"/>
    </source>
</evidence>
<reference key="1">
    <citation type="journal article" date="2005" name="Science">
        <title>Life at depth: Photobacterium profundum genome sequence and expression analysis.</title>
        <authorList>
            <person name="Vezzi A."/>
            <person name="Campanaro S."/>
            <person name="D'Angelo M."/>
            <person name="Simonato F."/>
            <person name="Vitulo N."/>
            <person name="Lauro F.M."/>
            <person name="Cestaro A."/>
            <person name="Malacrida G."/>
            <person name="Simionati B."/>
            <person name="Cannata N."/>
            <person name="Romualdi C."/>
            <person name="Bartlett D.H."/>
            <person name="Valle G."/>
        </authorList>
    </citation>
    <scope>NUCLEOTIDE SEQUENCE [LARGE SCALE GENOMIC DNA]</scope>
    <source>
        <strain>ATCC BAA-1253 / SS9</strain>
    </source>
</reference>
<accession>Q6LQL4</accession>
<comment type="catalytic activity">
    <reaction evidence="2">
        <text>GTP + H2O = 7,8-dihydroneopterin 3'-triphosphate + formate + H(+)</text>
        <dbReference type="Rhea" id="RHEA:17473"/>
        <dbReference type="ChEBI" id="CHEBI:15377"/>
        <dbReference type="ChEBI" id="CHEBI:15378"/>
        <dbReference type="ChEBI" id="CHEBI:15740"/>
        <dbReference type="ChEBI" id="CHEBI:37565"/>
        <dbReference type="ChEBI" id="CHEBI:58462"/>
        <dbReference type="EC" id="3.5.4.16"/>
    </reaction>
</comment>
<comment type="pathway">
    <text evidence="2">Cofactor biosynthesis; 7,8-dihydroneopterin triphosphate biosynthesis; 7,8-dihydroneopterin triphosphate from GTP: step 1/1.</text>
</comment>
<comment type="subunit">
    <text evidence="1">Toroid-shaped homodecamer, composed of two pentamers of five dimers.</text>
</comment>
<comment type="similarity">
    <text evidence="2">Belongs to the GTP cyclohydrolase I family.</text>
</comment>
<dbReference type="EC" id="3.5.4.16" evidence="2"/>
<dbReference type="EMBL" id="CR378669">
    <property type="protein sequence ID" value="CAG20412.1"/>
    <property type="molecule type" value="Genomic_DNA"/>
</dbReference>
<dbReference type="RefSeq" id="WP_006232024.1">
    <property type="nucleotide sequence ID" value="NC_006370.1"/>
</dbReference>
<dbReference type="SMR" id="Q6LQL4"/>
<dbReference type="STRING" id="298386.PBPRA2009"/>
<dbReference type="KEGG" id="ppr:PBPRA2009"/>
<dbReference type="eggNOG" id="COG0302">
    <property type="taxonomic scope" value="Bacteria"/>
</dbReference>
<dbReference type="HOGENOM" id="CLU_049768_3_2_6"/>
<dbReference type="UniPathway" id="UPA00848">
    <property type="reaction ID" value="UER00151"/>
</dbReference>
<dbReference type="Proteomes" id="UP000000593">
    <property type="component" value="Chromosome 1"/>
</dbReference>
<dbReference type="GO" id="GO:0005737">
    <property type="term" value="C:cytoplasm"/>
    <property type="evidence" value="ECO:0007669"/>
    <property type="project" value="TreeGrafter"/>
</dbReference>
<dbReference type="GO" id="GO:0005525">
    <property type="term" value="F:GTP binding"/>
    <property type="evidence" value="ECO:0007669"/>
    <property type="project" value="UniProtKB-KW"/>
</dbReference>
<dbReference type="GO" id="GO:0003934">
    <property type="term" value="F:GTP cyclohydrolase I activity"/>
    <property type="evidence" value="ECO:0007669"/>
    <property type="project" value="UniProtKB-UniRule"/>
</dbReference>
<dbReference type="GO" id="GO:0008270">
    <property type="term" value="F:zinc ion binding"/>
    <property type="evidence" value="ECO:0007669"/>
    <property type="project" value="UniProtKB-UniRule"/>
</dbReference>
<dbReference type="GO" id="GO:0006730">
    <property type="term" value="P:one-carbon metabolic process"/>
    <property type="evidence" value="ECO:0007669"/>
    <property type="project" value="UniProtKB-UniRule"/>
</dbReference>
<dbReference type="GO" id="GO:0006729">
    <property type="term" value="P:tetrahydrobiopterin biosynthetic process"/>
    <property type="evidence" value="ECO:0007669"/>
    <property type="project" value="TreeGrafter"/>
</dbReference>
<dbReference type="GO" id="GO:0046654">
    <property type="term" value="P:tetrahydrofolate biosynthetic process"/>
    <property type="evidence" value="ECO:0007669"/>
    <property type="project" value="UniProtKB-UniRule"/>
</dbReference>
<dbReference type="FunFam" id="3.30.1130.10:FF:000001">
    <property type="entry name" value="GTP cyclohydrolase 1"/>
    <property type="match status" value="1"/>
</dbReference>
<dbReference type="Gene3D" id="1.10.286.10">
    <property type="match status" value="1"/>
</dbReference>
<dbReference type="Gene3D" id="3.30.1130.10">
    <property type="match status" value="1"/>
</dbReference>
<dbReference type="HAMAP" id="MF_00223">
    <property type="entry name" value="FolE"/>
    <property type="match status" value="1"/>
</dbReference>
<dbReference type="InterPro" id="IPR043133">
    <property type="entry name" value="GTP-CH-I_C/QueF"/>
</dbReference>
<dbReference type="InterPro" id="IPR043134">
    <property type="entry name" value="GTP-CH-I_N"/>
</dbReference>
<dbReference type="InterPro" id="IPR001474">
    <property type="entry name" value="GTP_CycHdrlase_I"/>
</dbReference>
<dbReference type="InterPro" id="IPR018234">
    <property type="entry name" value="GTP_CycHdrlase_I_CS"/>
</dbReference>
<dbReference type="InterPro" id="IPR020602">
    <property type="entry name" value="GTP_CycHdrlase_I_dom"/>
</dbReference>
<dbReference type="NCBIfam" id="TIGR00063">
    <property type="entry name" value="folE"/>
    <property type="match status" value="1"/>
</dbReference>
<dbReference type="NCBIfam" id="NF006824">
    <property type="entry name" value="PRK09347.1-1"/>
    <property type="match status" value="1"/>
</dbReference>
<dbReference type="NCBIfam" id="NF006826">
    <property type="entry name" value="PRK09347.1-3"/>
    <property type="match status" value="1"/>
</dbReference>
<dbReference type="PANTHER" id="PTHR11109:SF7">
    <property type="entry name" value="GTP CYCLOHYDROLASE 1"/>
    <property type="match status" value="1"/>
</dbReference>
<dbReference type="PANTHER" id="PTHR11109">
    <property type="entry name" value="GTP CYCLOHYDROLASE I"/>
    <property type="match status" value="1"/>
</dbReference>
<dbReference type="Pfam" id="PF01227">
    <property type="entry name" value="GTP_cyclohydroI"/>
    <property type="match status" value="1"/>
</dbReference>
<dbReference type="SUPFAM" id="SSF55620">
    <property type="entry name" value="Tetrahydrobiopterin biosynthesis enzymes-like"/>
    <property type="match status" value="1"/>
</dbReference>
<dbReference type="PROSITE" id="PS00859">
    <property type="entry name" value="GTP_CYCLOHYDROL_1_1"/>
    <property type="match status" value="1"/>
</dbReference>
<dbReference type="PROSITE" id="PS00860">
    <property type="entry name" value="GTP_CYCLOHYDROL_1_2"/>
    <property type="match status" value="1"/>
</dbReference>
<feature type="chain" id="PRO_1000043716" description="GTP cyclohydrolase 1">
    <location>
        <begin position="1"/>
        <end position="217"/>
    </location>
</feature>
<feature type="binding site" evidence="2">
    <location>
        <position position="109"/>
    </location>
    <ligand>
        <name>Zn(2+)</name>
        <dbReference type="ChEBI" id="CHEBI:29105"/>
    </ligand>
</feature>
<feature type="binding site" evidence="2">
    <location>
        <position position="112"/>
    </location>
    <ligand>
        <name>Zn(2+)</name>
        <dbReference type="ChEBI" id="CHEBI:29105"/>
    </ligand>
</feature>
<feature type="binding site" evidence="2">
    <location>
        <position position="180"/>
    </location>
    <ligand>
        <name>Zn(2+)</name>
        <dbReference type="ChEBI" id="CHEBI:29105"/>
    </ligand>
</feature>
<gene>
    <name evidence="2" type="primary">folE</name>
    <name type="ordered locus">PBPRA2009</name>
</gene>
<proteinExistence type="inferred from homology"/>